<feature type="chain" id="PRO_0000368865" description="ATP synthase subunit b 2">
    <location>
        <begin position="1"/>
        <end position="207"/>
    </location>
</feature>
<feature type="transmembrane region" description="Helical" evidence="1">
    <location>
        <begin position="48"/>
        <end position="70"/>
    </location>
</feature>
<feature type="region of interest" description="Disordered" evidence="2">
    <location>
        <begin position="1"/>
        <end position="41"/>
    </location>
</feature>
<feature type="compositionally biased region" description="Low complexity" evidence="2">
    <location>
        <begin position="1"/>
        <end position="31"/>
    </location>
</feature>
<sequence>MVAQAAPPAGTAGQGTHEAASAAHGAAAAHGAAEEGHGKKSHFPPFDATTFASQLLWLVLSFGLLYLLMSRVALPRIGRILEERHDRIADDLEEAAKHKAESEAAQASYEKALAEARAKANAIAGETRNRLAADSEANRKSLEAGLAVKLATAEQSIASTKTEALTHVRGIAVDATHAIVSTLIGSSPAQSDVEKAVDVALVKKDAA</sequence>
<reference key="1">
    <citation type="submission" date="2007-07" db="EMBL/GenBank/DDBJ databases">
        <title>Complete sequence of chromosome of Xanthobacter autotrophicus Py2.</title>
        <authorList>
            <consortium name="US DOE Joint Genome Institute"/>
            <person name="Copeland A."/>
            <person name="Lucas S."/>
            <person name="Lapidus A."/>
            <person name="Barry K."/>
            <person name="Glavina del Rio T."/>
            <person name="Hammon N."/>
            <person name="Israni S."/>
            <person name="Dalin E."/>
            <person name="Tice H."/>
            <person name="Pitluck S."/>
            <person name="Sims D."/>
            <person name="Brettin T."/>
            <person name="Bruce D."/>
            <person name="Detter J.C."/>
            <person name="Han C."/>
            <person name="Tapia R."/>
            <person name="Brainard J."/>
            <person name="Schmutz J."/>
            <person name="Larimer F."/>
            <person name="Land M."/>
            <person name="Hauser L."/>
            <person name="Kyrpides N."/>
            <person name="Kim E."/>
            <person name="Ensigns S.A."/>
            <person name="Richardson P."/>
        </authorList>
    </citation>
    <scope>NUCLEOTIDE SEQUENCE [LARGE SCALE GENOMIC DNA]</scope>
    <source>
        <strain>ATCC BAA-1158 / Py2</strain>
    </source>
</reference>
<keyword id="KW-0066">ATP synthesis</keyword>
<keyword id="KW-0997">Cell inner membrane</keyword>
<keyword id="KW-1003">Cell membrane</keyword>
<keyword id="KW-0138">CF(0)</keyword>
<keyword id="KW-0375">Hydrogen ion transport</keyword>
<keyword id="KW-0406">Ion transport</keyword>
<keyword id="KW-0472">Membrane</keyword>
<keyword id="KW-1185">Reference proteome</keyword>
<keyword id="KW-0812">Transmembrane</keyword>
<keyword id="KW-1133">Transmembrane helix</keyword>
<keyword id="KW-0813">Transport</keyword>
<organism>
    <name type="scientific">Xanthobacter autotrophicus (strain ATCC BAA-1158 / Py2)</name>
    <dbReference type="NCBI Taxonomy" id="78245"/>
    <lineage>
        <taxon>Bacteria</taxon>
        <taxon>Pseudomonadati</taxon>
        <taxon>Pseudomonadota</taxon>
        <taxon>Alphaproteobacteria</taxon>
        <taxon>Hyphomicrobiales</taxon>
        <taxon>Xanthobacteraceae</taxon>
        <taxon>Xanthobacter</taxon>
    </lineage>
</organism>
<evidence type="ECO:0000255" key="1">
    <source>
        <dbReference type="HAMAP-Rule" id="MF_01398"/>
    </source>
</evidence>
<evidence type="ECO:0000256" key="2">
    <source>
        <dbReference type="SAM" id="MobiDB-lite"/>
    </source>
</evidence>
<name>ATPF2_XANP2</name>
<proteinExistence type="inferred from homology"/>
<protein>
    <recommendedName>
        <fullName evidence="1">ATP synthase subunit b 2</fullName>
    </recommendedName>
    <alternativeName>
        <fullName evidence="1">ATP synthase F(0) sector subunit b 2</fullName>
    </alternativeName>
    <alternativeName>
        <fullName evidence="1">ATPase subunit I 2</fullName>
    </alternativeName>
    <alternativeName>
        <fullName evidence="1">F-type ATPase subunit b 2</fullName>
        <shortName evidence="1">F-ATPase subunit b 2</shortName>
    </alternativeName>
</protein>
<gene>
    <name evidence="1" type="primary">atpF2</name>
    <name type="ordered locus">Xaut_1977</name>
</gene>
<accession>A7IGS8</accession>
<dbReference type="EMBL" id="CP000781">
    <property type="protein sequence ID" value="ABS67221.1"/>
    <property type="molecule type" value="Genomic_DNA"/>
</dbReference>
<dbReference type="SMR" id="A7IGS8"/>
<dbReference type="STRING" id="78245.Xaut_1977"/>
<dbReference type="KEGG" id="xau:Xaut_1977"/>
<dbReference type="eggNOG" id="COG0711">
    <property type="taxonomic scope" value="Bacteria"/>
</dbReference>
<dbReference type="HOGENOM" id="CLU_079215_1_2_5"/>
<dbReference type="OrthoDB" id="9805716at2"/>
<dbReference type="PhylomeDB" id="A7IGS8"/>
<dbReference type="Proteomes" id="UP000002417">
    <property type="component" value="Chromosome"/>
</dbReference>
<dbReference type="GO" id="GO:0005886">
    <property type="term" value="C:plasma membrane"/>
    <property type="evidence" value="ECO:0007669"/>
    <property type="project" value="UniProtKB-SubCell"/>
</dbReference>
<dbReference type="GO" id="GO:0045259">
    <property type="term" value="C:proton-transporting ATP synthase complex"/>
    <property type="evidence" value="ECO:0007669"/>
    <property type="project" value="UniProtKB-KW"/>
</dbReference>
<dbReference type="GO" id="GO:0046933">
    <property type="term" value="F:proton-transporting ATP synthase activity, rotational mechanism"/>
    <property type="evidence" value="ECO:0007669"/>
    <property type="project" value="UniProtKB-UniRule"/>
</dbReference>
<dbReference type="GO" id="GO:0046961">
    <property type="term" value="F:proton-transporting ATPase activity, rotational mechanism"/>
    <property type="evidence" value="ECO:0007669"/>
    <property type="project" value="TreeGrafter"/>
</dbReference>
<dbReference type="CDD" id="cd06503">
    <property type="entry name" value="ATP-synt_Fo_b"/>
    <property type="match status" value="1"/>
</dbReference>
<dbReference type="Gene3D" id="6.10.250.1580">
    <property type="match status" value="1"/>
</dbReference>
<dbReference type="HAMAP" id="MF_01398">
    <property type="entry name" value="ATP_synth_b_bprime"/>
    <property type="match status" value="1"/>
</dbReference>
<dbReference type="InterPro" id="IPR002146">
    <property type="entry name" value="ATP_synth_b/b'su_bac/chlpt"/>
</dbReference>
<dbReference type="InterPro" id="IPR050059">
    <property type="entry name" value="ATP_synthase_B_chain"/>
</dbReference>
<dbReference type="NCBIfam" id="NF006612">
    <property type="entry name" value="PRK09174.1"/>
    <property type="match status" value="1"/>
</dbReference>
<dbReference type="PANTHER" id="PTHR33445:SF1">
    <property type="entry name" value="ATP SYNTHASE SUBUNIT B"/>
    <property type="match status" value="1"/>
</dbReference>
<dbReference type="PANTHER" id="PTHR33445">
    <property type="entry name" value="ATP SYNTHASE SUBUNIT B', CHLOROPLASTIC"/>
    <property type="match status" value="1"/>
</dbReference>
<dbReference type="Pfam" id="PF00430">
    <property type="entry name" value="ATP-synt_B"/>
    <property type="match status" value="1"/>
</dbReference>
<comment type="function">
    <text evidence="1">F(1)F(0) ATP synthase produces ATP from ADP in the presence of a proton or sodium gradient. F-type ATPases consist of two structural domains, F(1) containing the extramembraneous catalytic core and F(0) containing the membrane proton channel, linked together by a central stalk and a peripheral stalk. During catalysis, ATP synthesis in the catalytic domain of F(1) is coupled via a rotary mechanism of the central stalk subunits to proton translocation.</text>
</comment>
<comment type="function">
    <text evidence="1">Component of the F(0) channel, it forms part of the peripheral stalk, linking F(1) to F(0).</text>
</comment>
<comment type="subunit">
    <text evidence="1">F-type ATPases have 2 components, F(1) - the catalytic core - and F(0) - the membrane proton channel. F(1) has five subunits: alpha(3), beta(3), gamma(1), delta(1), epsilon(1). F(0) has three main subunits: a(1), b(2) and c(10-14). The alpha and beta chains form an alternating ring which encloses part of the gamma chain. F(1) is attached to F(0) by a central stalk formed by the gamma and epsilon chains, while a peripheral stalk is formed by the delta and b chains.</text>
</comment>
<comment type="subcellular location">
    <subcellularLocation>
        <location evidence="1">Cell inner membrane</location>
        <topology evidence="1">Single-pass membrane protein</topology>
    </subcellularLocation>
</comment>
<comment type="similarity">
    <text evidence="1">Belongs to the ATPase B chain family.</text>
</comment>